<feature type="chain" id="PRO_0000359077" description="Acetyl-coenzyme A carboxylase carboxyl transferase subunit beta">
    <location>
        <begin position="1"/>
        <end position="314"/>
    </location>
</feature>
<feature type="domain" description="CoA carboxyltransferase N-terminal" evidence="2">
    <location>
        <begin position="37"/>
        <end position="307"/>
    </location>
</feature>
<feature type="zinc finger region" description="C4-type" evidence="1">
    <location>
        <begin position="41"/>
        <end position="63"/>
    </location>
</feature>
<feature type="binding site" evidence="1">
    <location>
        <position position="41"/>
    </location>
    <ligand>
        <name>Zn(2+)</name>
        <dbReference type="ChEBI" id="CHEBI:29105"/>
    </ligand>
</feature>
<feature type="binding site" evidence="1">
    <location>
        <position position="44"/>
    </location>
    <ligand>
        <name>Zn(2+)</name>
        <dbReference type="ChEBI" id="CHEBI:29105"/>
    </ligand>
</feature>
<feature type="binding site" evidence="1">
    <location>
        <position position="60"/>
    </location>
    <ligand>
        <name>Zn(2+)</name>
        <dbReference type="ChEBI" id="CHEBI:29105"/>
    </ligand>
</feature>
<feature type="binding site" evidence="1">
    <location>
        <position position="63"/>
    </location>
    <ligand>
        <name>Zn(2+)</name>
        <dbReference type="ChEBI" id="CHEBI:29105"/>
    </ligand>
</feature>
<gene>
    <name evidence="1" type="primary">accD</name>
    <name type="ordered locus">CYB_2665</name>
</gene>
<protein>
    <recommendedName>
        <fullName evidence="1">Acetyl-coenzyme A carboxylase carboxyl transferase subunit beta</fullName>
        <shortName evidence="1">ACCase subunit beta</shortName>
        <shortName evidence="1">Acetyl-CoA carboxylase carboxyltransferase subunit beta</shortName>
        <ecNumber evidence="1">2.1.3.15</ecNumber>
    </recommendedName>
</protein>
<reference key="1">
    <citation type="journal article" date="2007" name="ISME J.">
        <title>Population level functional diversity in a microbial community revealed by comparative genomic and metagenomic analyses.</title>
        <authorList>
            <person name="Bhaya D."/>
            <person name="Grossman A.R."/>
            <person name="Steunou A.-S."/>
            <person name="Khuri N."/>
            <person name="Cohan F.M."/>
            <person name="Hamamura N."/>
            <person name="Melendrez M.C."/>
            <person name="Bateson M.M."/>
            <person name="Ward D.M."/>
            <person name="Heidelberg J.F."/>
        </authorList>
    </citation>
    <scope>NUCLEOTIDE SEQUENCE [LARGE SCALE GENOMIC DNA]</scope>
    <source>
        <strain>JA-2-3B'a(2-13)</strain>
    </source>
</reference>
<accession>Q2JIG8</accession>
<name>ACCD_SYNJB</name>
<sequence>MSLLDWFAERRRQTSLNLTGSSPFDKERQVREIADGLWQKCPACDTLTYTKDLQQNWQVCPSCGHHHRITAPERLEQLLDPGSWQPLDEHLAPTDPLHFFDQKPYSERLATYQERTQLKDAVLTGLGSLEGIPVAIGVMDFRFMGGSMGSVVGEKIARLTERATCDHLPLILFSASGGARMQEGILSLMQMAKTSAALQRHRDARQLFISVLTHPTYGGVTASFAMLGDLILAEPGVQVGFAGPNVIEQTIGKGKLPEGFQTAEYLLAQGLIDAIVPRTELRKRLAQLLSMHRPRLHMSLPSIDSEALTLQPML</sequence>
<proteinExistence type="inferred from homology"/>
<comment type="function">
    <text evidence="1">Component of the acetyl coenzyme A carboxylase (ACC) complex. Biotin carboxylase (BC) catalyzes the carboxylation of biotin on its carrier protein (BCCP) and then the CO(2) group is transferred by the transcarboxylase to acetyl-CoA to form malonyl-CoA.</text>
</comment>
<comment type="catalytic activity">
    <reaction evidence="1">
        <text>N(6)-carboxybiotinyl-L-lysyl-[protein] + acetyl-CoA = N(6)-biotinyl-L-lysyl-[protein] + malonyl-CoA</text>
        <dbReference type="Rhea" id="RHEA:54728"/>
        <dbReference type="Rhea" id="RHEA-COMP:10505"/>
        <dbReference type="Rhea" id="RHEA-COMP:10506"/>
        <dbReference type="ChEBI" id="CHEBI:57288"/>
        <dbReference type="ChEBI" id="CHEBI:57384"/>
        <dbReference type="ChEBI" id="CHEBI:83144"/>
        <dbReference type="ChEBI" id="CHEBI:83145"/>
        <dbReference type="EC" id="2.1.3.15"/>
    </reaction>
</comment>
<comment type="cofactor">
    <cofactor evidence="1">
        <name>Zn(2+)</name>
        <dbReference type="ChEBI" id="CHEBI:29105"/>
    </cofactor>
    <text evidence="1">Binds 1 zinc ion per subunit.</text>
</comment>
<comment type="pathway">
    <text evidence="1">Lipid metabolism; malonyl-CoA biosynthesis; malonyl-CoA from acetyl-CoA: step 1/1.</text>
</comment>
<comment type="subunit">
    <text evidence="1">Acetyl-CoA carboxylase is a heterohexamer composed of biotin carboxyl carrier protein (AccB), biotin carboxylase (AccC) and two subunits each of ACCase subunit alpha (AccA) and ACCase subunit beta (AccD).</text>
</comment>
<comment type="subcellular location">
    <subcellularLocation>
        <location evidence="1">Cytoplasm</location>
    </subcellularLocation>
</comment>
<comment type="similarity">
    <text evidence="1">Belongs to the AccD/PCCB family.</text>
</comment>
<organism>
    <name type="scientific">Synechococcus sp. (strain JA-2-3B'a(2-13))</name>
    <name type="common">Cyanobacteria bacterium Yellowstone B-Prime</name>
    <dbReference type="NCBI Taxonomy" id="321332"/>
    <lineage>
        <taxon>Bacteria</taxon>
        <taxon>Bacillati</taxon>
        <taxon>Cyanobacteriota</taxon>
        <taxon>Cyanophyceae</taxon>
        <taxon>Synechococcales</taxon>
        <taxon>Synechococcaceae</taxon>
        <taxon>Synechococcus</taxon>
    </lineage>
</organism>
<dbReference type="EC" id="2.1.3.15" evidence="1"/>
<dbReference type="EMBL" id="CP000240">
    <property type="protein sequence ID" value="ABD03591.1"/>
    <property type="molecule type" value="Genomic_DNA"/>
</dbReference>
<dbReference type="RefSeq" id="WP_011434210.1">
    <property type="nucleotide sequence ID" value="NC_007776.1"/>
</dbReference>
<dbReference type="SMR" id="Q2JIG8"/>
<dbReference type="STRING" id="321332.CYB_2665"/>
<dbReference type="KEGG" id="cyb:CYB_2665"/>
<dbReference type="eggNOG" id="COG0777">
    <property type="taxonomic scope" value="Bacteria"/>
</dbReference>
<dbReference type="HOGENOM" id="CLU_015486_1_1_3"/>
<dbReference type="OrthoDB" id="9772975at2"/>
<dbReference type="UniPathway" id="UPA00655">
    <property type="reaction ID" value="UER00711"/>
</dbReference>
<dbReference type="Proteomes" id="UP000001938">
    <property type="component" value="Chromosome"/>
</dbReference>
<dbReference type="GO" id="GO:0009317">
    <property type="term" value="C:acetyl-CoA carboxylase complex"/>
    <property type="evidence" value="ECO:0007669"/>
    <property type="project" value="InterPro"/>
</dbReference>
<dbReference type="GO" id="GO:0003989">
    <property type="term" value="F:acetyl-CoA carboxylase activity"/>
    <property type="evidence" value="ECO:0007669"/>
    <property type="project" value="InterPro"/>
</dbReference>
<dbReference type="GO" id="GO:0005524">
    <property type="term" value="F:ATP binding"/>
    <property type="evidence" value="ECO:0007669"/>
    <property type="project" value="UniProtKB-KW"/>
</dbReference>
<dbReference type="GO" id="GO:0016743">
    <property type="term" value="F:carboxyl- or carbamoyltransferase activity"/>
    <property type="evidence" value="ECO:0007669"/>
    <property type="project" value="UniProtKB-UniRule"/>
</dbReference>
<dbReference type="GO" id="GO:0008270">
    <property type="term" value="F:zinc ion binding"/>
    <property type="evidence" value="ECO:0007669"/>
    <property type="project" value="UniProtKB-UniRule"/>
</dbReference>
<dbReference type="GO" id="GO:0006633">
    <property type="term" value="P:fatty acid biosynthetic process"/>
    <property type="evidence" value="ECO:0007669"/>
    <property type="project" value="UniProtKB-KW"/>
</dbReference>
<dbReference type="GO" id="GO:2001295">
    <property type="term" value="P:malonyl-CoA biosynthetic process"/>
    <property type="evidence" value="ECO:0007669"/>
    <property type="project" value="UniProtKB-UniRule"/>
</dbReference>
<dbReference type="Gene3D" id="3.90.226.10">
    <property type="entry name" value="2-enoyl-CoA Hydratase, Chain A, domain 1"/>
    <property type="match status" value="1"/>
</dbReference>
<dbReference type="HAMAP" id="MF_01395">
    <property type="entry name" value="AcetylCoA_CT_beta"/>
    <property type="match status" value="1"/>
</dbReference>
<dbReference type="InterPro" id="IPR034733">
    <property type="entry name" value="AcCoA_carboxyl_beta"/>
</dbReference>
<dbReference type="InterPro" id="IPR000438">
    <property type="entry name" value="Acetyl_CoA_COase_Trfase_b_su"/>
</dbReference>
<dbReference type="InterPro" id="IPR029045">
    <property type="entry name" value="ClpP/crotonase-like_dom_sf"/>
</dbReference>
<dbReference type="InterPro" id="IPR011762">
    <property type="entry name" value="COA_CT_N"/>
</dbReference>
<dbReference type="InterPro" id="IPR041010">
    <property type="entry name" value="Znf-ACC"/>
</dbReference>
<dbReference type="NCBIfam" id="TIGR00515">
    <property type="entry name" value="accD"/>
    <property type="match status" value="1"/>
</dbReference>
<dbReference type="PANTHER" id="PTHR42995">
    <property type="entry name" value="ACETYL-COENZYME A CARBOXYLASE CARBOXYL TRANSFERASE SUBUNIT BETA, CHLOROPLASTIC"/>
    <property type="match status" value="1"/>
</dbReference>
<dbReference type="PANTHER" id="PTHR42995:SF5">
    <property type="entry name" value="ACETYL-COENZYME A CARBOXYLASE CARBOXYL TRANSFERASE SUBUNIT BETA, CHLOROPLASTIC"/>
    <property type="match status" value="1"/>
</dbReference>
<dbReference type="Pfam" id="PF01039">
    <property type="entry name" value="Carboxyl_trans"/>
    <property type="match status" value="1"/>
</dbReference>
<dbReference type="Pfam" id="PF17848">
    <property type="entry name" value="Zn_ribbon_ACC"/>
    <property type="match status" value="1"/>
</dbReference>
<dbReference type="PRINTS" id="PR01070">
    <property type="entry name" value="ACCCTRFRASEB"/>
</dbReference>
<dbReference type="SUPFAM" id="SSF52096">
    <property type="entry name" value="ClpP/crotonase"/>
    <property type="match status" value="1"/>
</dbReference>
<dbReference type="PROSITE" id="PS50980">
    <property type="entry name" value="COA_CT_NTER"/>
    <property type="match status" value="1"/>
</dbReference>
<evidence type="ECO:0000255" key="1">
    <source>
        <dbReference type="HAMAP-Rule" id="MF_01395"/>
    </source>
</evidence>
<evidence type="ECO:0000255" key="2">
    <source>
        <dbReference type="PROSITE-ProRule" id="PRU01136"/>
    </source>
</evidence>
<keyword id="KW-0067">ATP-binding</keyword>
<keyword id="KW-0963">Cytoplasm</keyword>
<keyword id="KW-0275">Fatty acid biosynthesis</keyword>
<keyword id="KW-0276">Fatty acid metabolism</keyword>
<keyword id="KW-0444">Lipid biosynthesis</keyword>
<keyword id="KW-0443">Lipid metabolism</keyword>
<keyword id="KW-0479">Metal-binding</keyword>
<keyword id="KW-0547">Nucleotide-binding</keyword>
<keyword id="KW-1185">Reference proteome</keyword>
<keyword id="KW-0808">Transferase</keyword>
<keyword id="KW-0862">Zinc</keyword>
<keyword id="KW-0863">Zinc-finger</keyword>